<reference key="1">
    <citation type="journal article" date="2003" name="Science">
        <title>Role of mobile DNA in the evolution of vancomycin-resistant Enterococcus faecalis.</title>
        <authorList>
            <person name="Paulsen I.T."/>
            <person name="Banerjei L."/>
            <person name="Myers G.S.A."/>
            <person name="Nelson K.E."/>
            <person name="Seshadri R."/>
            <person name="Read T.D."/>
            <person name="Fouts D.E."/>
            <person name="Eisen J.A."/>
            <person name="Gill S.R."/>
            <person name="Heidelberg J.F."/>
            <person name="Tettelin H."/>
            <person name="Dodson R.J."/>
            <person name="Umayam L.A."/>
            <person name="Brinkac L.M."/>
            <person name="Beanan M.J."/>
            <person name="Daugherty S.C."/>
            <person name="DeBoy R.T."/>
            <person name="Durkin S.A."/>
            <person name="Kolonay J.F."/>
            <person name="Madupu R."/>
            <person name="Nelson W.C."/>
            <person name="Vamathevan J.J."/>
            <person name="Tran B."/>
            <person name="Upton J."/>
            <person name="Hansen T."/>
            <person name="Shetty J."/>
            <person name="Khouri H.M."/>
            <person name="Utterback T.R."/>
            <person name="Radune D."/>
            <person name="Ketchum K.A."/>
            <person name="Dougherty B.A."/>
            <person name="Fraser C.M."/>
        </authorList>
    </citation>
    <scope>NUCLEOTIDE SEQUENCE [LARGE SCALE GENOMIC DNA]</scope>
    <source>
        <strain>ATCC 700802 / V583</strain>
    </source>
</reference>
<evidence type="ECO:0000255" key="1">
    <source>
        <dbReference type="HAMAP-Rule" id="MF_00053"/>
    </source>
</evidence>
<evidence type="ECO:0000255" key="2">
    <source>
        <dbReference type="PROSITE-ProRule" id="PRU01319"/>
    </source>
</evidence>
<sequence length="305" mass="33750">MAQNHVIKVSKKTLAEMTTVYQPNRLNKTVPYTVFVAKVGTTTITAYQSGKVMFQGPQAEKEAARWEGTSTTPKKKVSPQTTTLPADFGNWSVIGSDEVGNGSYFGPVTVCAAYVDKSMISKLKSLGVRDSKELTDPQIIQLSHVIKELIPYKLLIVEPKKYNEIQPNYNAVHMKVALHNQAIYLLLQELAPTKPEGILIDQFTPENNYRKYVRNEKNQVTEKLFFVTKGEQYHVAVAAASIISRAAFLEELDKESAELGFSVPSGAGSKSDQVAARILKKGGLDLLANYAKLHFANTQKAQKLL</sequence>
<gene>
    <name evidence="1" type="primary">rnhC</name>
    <name type="ordered locus">EF_1267</name>
</gene>
<protein>
    <recommendedName>
        <fullName evidence="1">Ribonuclease HIII</fullName>
        <shortName evidence="1">RNase HIII</shortName>
        <ecNumber evidence="1">3.1.26.4</ecNumber>
    </recommendedName>
</protein>
<accession>Q835V5</accession>
<feature type="chain" id="PRO_1000031229" description="Ribonuclease HIII">
    <location>
        <begin position="1"/>
        <end position="305"/>
    </location>
</feature>
<feature type="domain" description="RNase H type-2" evidence="2">
    <location>
        <begin position="91"/>
        <end position="305"/>
    </location>
</feature>
<feature type="binding site" evidence="1">
    <location>
        <position position="97"/>
    </location>
    <ligand>
        <name>a divalent metal cation</name>
        <dbReference type="ChEBI" id="CHEBI:60240"/>
    </ligand>
</feature>
<feature type="binding site" evidence="1">
    <location>
        <position position="98"/>
    </location>
    <ligand>
        <name>a divalent metal cation</name>
        <dbReference type="ChEBI" id="CHEBI:60240"/>
    </ligand>
</feature>
<feature type="binding site" evidence="1">
    <location>
        <position position="201"/>
    </location>
    <ligand>
        <name>a divalent metal cation</name>
        <dbReference type="ChEBI" id="CHEBI:60240"/>
    </ligand>
</feature>
<proteinExistence type="inferred from homology"/>
<organism>
    <name type="scientific">Enterococcus faecalis (strain ATCC 700802 / V583)</name>
    <dbReference type="NCBI Taxonomy" id="226185"/>
    <lineage>
        <taxon>Bacteria</taxon>
        <taxon>Bacillati</taxon>
        <taxon>Bacillota</taxon>
        <taxon>Bacilli</taxon>
        <taxon>Lactobacillales</taxon>
        <taxon>Enterococcaceae</taxon>
        <taxon>Enterococcus</taxon>
    </lineage>
</organism>
<keyword id="KW-0963">Cytoplasm</keyword>
<keyword id="KW-0255">Endonuclease</keyword>
<keyword id="KW-0378">Hydrolase</keyword>
<keyword id="KW-0460">Magnesium</keyword>
<keyword id="KW-0479">Metal-binding</keyword>
<keyword id="KW-0540">Nuclease</keyword>
<keyword id="KW-1185">Reference proteome</keyword>
<name>RNH3_ENTFA</name>
<dbReference type="EC" id="3.1.26.4" evidence="1"/>
<dbReference type="EMBL" id="AE016830">
    <property type="protein sequence ID" value="AAO81060.1"/>
    <property type="molecule type" value="Genomic_DNA"/>
</dbReference>
<dbReference type="RefSeq" id="NP_814990.1">
    <property type="nucleotide sequence ID" value="NC_004668.1"/>
</dbReference>
<dbReference type="RefSeq" id="WP_002386662.1">
    <property type="nucleotide sequence ID" value="NZ_KE136528.1"/>
</dbReference>
<dbReference type="SMR" id="Q835V5"/>
<dbReference type="STRING" id="226185.EF_1267"/>
<dbReference type="EnsemblBacteria" id="AAO81060">
    <property type="protein sequence ID" value="AAO81060"/>
    <property type="gene ID" value="EF_1267"/>
</dbReference>
<dbReference type="KEGG" id="efa:EF1267"/>
<dbReference type="PATRIC" id="fig|226185.45.peg.2235"/>
<dbReference type="eggNOG" id="COG1039">
    <property type="taxonomic scope" value="Bacteria"/>
</dbReference>
<dbReference type="HOGENOM" id="CLU_059546_1_0_9"/>
<dbReference type="Proteomes" id="UP000001415">
    <property type="component" value="Chromosome"/>
</dbReference>
<dbReference type="GO" id="GO:0005737">
    <property type="term" value="C:cytoplasm"/>
    <property type="evidence" value="ECO:0007669"/>
    <property type="project" value="UniProtKB-SubCell"/>
</dbReference>
<dbReference type="GO" id="GO:0032299">
    <property type="term" value="C:ribonuclease H2 complex"/>
    <property type="evidence" value="ECO:0007669"/>
    <property type="project" value="TreeGrafter"/>
</dbReference>
<dbReference type="GO" id="GO:0000287">
    <property type="term" value="F:magnesium ion binding"/>
    <property type="evidence" value="ECO:0007669"/>
    <property type="project" value="UniProtKB-UniRule"/>
</dbReference>
<dbReference type="GO" id="GO:0003723">
    <property type="term" value="F:RNA binding"/>
    <property type="evidence" value="ECO:0007669"/>
    <property type="project" value="InterPro"/>
</dbReference>
<dbReference type="GO" id="GO:0004523">
    <property type="term" value="F:RNA-DNA hybrid ribonuclease activity"/>
    <property type="evidence" value="ECO:0007669"/>
    <property type="project" value="UniProtKB-UniRule"/>
</dbReference>
<dbReference type="GO" id="GO:0043137">
    <property type="term" value="P:DNA replication, removal of RNA primer"/>
    <property type="evidence" value="ECO:0007669"/>
    <property type="project" value="TreeGrafter"/>
</dbReference>
<dbReference type="GO" id="GO:0006298">
    <property type="term" value="P:mismatch repair"/>
    <property type="evidence" value="ECO:0007669"/>
    <property type="project" value="TreeGrafter"/>
</dbReference>
<dbReference type="CDD" id="cd06590">
    <property type="entry name" value="RNase_HII_bacteria_HIII_like"/>
    <property type="match status" value="1"/>
</dbReference>
<dbReference type="CDD" id="cd14796">
    <property type="entry name" value="RNAse_HIII_N"/>
    <property type="match status" value="1"/>
</dbReference>
<dbReference type="FunFam" id="3.30.420.10:FF:000047">
    <property type="entry name" value="Ribonuclease HIII"/>
    <property type="match status" value="1"/>
</dbReference>
<dbReference type="Gene3D" id="3.30.420.10">
    <property type="entry name" value="Ribonuclease H-like superfamily/Ribonuclease H"/>
    <property type="match status" value="1"/>
</dbReference>
<dbReference type="Gene3D" id="3.30.310.10">
    <property type="entry name" value="TATA-Binding Protein"/>
    <property type="match status" value="1"/>
</dbReference>
<dbReference type="HAMAP" id="MF_00053">
    <property type="entry name" value="RNase_HIII"/>
    <property type="match status" value="1"/>
</dbReference>
<dbReference type="InterPro" id="IPR001352">
    <property type="entry name" value="RNase_HII/HIII"/>
</dbReference>
<dbReference type="InterPro" id="IPR024567">
    <property type="entry name" value="RNase_HII/HIII_dom"/>
</dbReference>
<dbReference type="InterPro" id="IPR004641">
    <property type="entry name" value="RNase_HIII"/>
</dbReference>
<dbReference type="InterPro" id="IPR024568">
    <property type="entry name" value="RNase_HIII_N"/>
</dbReference>
<dbReference type="InterPro" id="IPR012337">
    <property type="entry name" value="RNaseH-like_sf"/>
</dbReference>
<dbReference type="InterPro" id="IPR036397">
    <property type="entry name" value="RNaseH_sf"/>
</dbReference>
<dbReference type="InterPro" id="IPR012295">
    <property type="entry name" value="TBP_dom_sf"/>
</dbReference>
<dbReference type="NCBIfam" id="TIGR00716">
    <property type="entry name" value="rnhC"/>
    <property type="match status" value="1"/>
</dbReference>
<dbReference type="PANTHER" id="PTHR10954:SF23">
    <property type="entry name" value="RIBONUCLEASE"/>
    <property type="match status" value="1"/>
</dbReference>
<dbReference type="PANTHER" id="PTHR10954">
    <property type="entry name" value="RIBONUCLEASE H2 SUBUNIT A"/>
    <property type="match status" value="1"/>
</dbReference>
<dbReference type="Pfam" id="PF11858">
    <property type="entry name" value="DUF3378"/>
    <property type="match status" value="1"/>
</dbReference>
<dbReference type="Pfam" id="PF01351">
    <property type="entry name" value="RNase_HII"/>
    <property type="match status" value="1"/>
</dbReference>
<dbReference type="PIRSF" id="PIRSF037748">
    <property type="entry name" value="RnhC"/>
    <property type="match status" value="1"/>
</dbReference>
<dbReference type="SUPFAM" id="SSF53098">
    <property type="entry name" value="Ribonuclease H-like"/>
    <property type="match status" value="1"/>
</dbReference>
<dbReference type="PROSITE" id="PS51975">
    <property type="entry name" value="RNASE_H_2"/>
    <property type="match status" value="1"/>
</dbReference>
<comment type="function">
    <text evidence="1">Endonuclease that specifically degrades the RNA of RNA-DNA hybrids.</text>
</comment>
<comment type="catalytic activity">
    <reaction evidence="1">
        <text>Endonucleolytic cleavage to 5'-phosphomonoester.</text>
        <dbReference type="EC" id="3.1.26.4"/>
    </reaction>
</comment>
<comment type="cofactor">
    <cofactor evidence="1">
        <name>Mn(2+)</name>
        <dbReference type="ChEBI" id="CHEBI:29035"/>
    </cofactor>
    <cofactor evidence="1">
        <name>Mg(2+)</name>
        <dbReference type="ChEBI" id="CHEBI:18420"/>
    </cofactor>
    <text evidence="1">Manganese or magnesium. Binds 1 divalent metal ion per monomer in the absence of substrate. May bind a second metal ion after substrate binding.</text>
</comment>
<comment type="subcellular location">
    <subcellularLocation>
        <location evidence="1">Cytoplasm</location>
    </subcellularLocation>
</comment>
<comment type="similarity">
    <text evidence="1">Belongs to the RNase HII family. RnhC subfamily.</text>
</comment>